<name>RNC_RHIR8</name>
<keyword id="KW-0963">Cytoplasm</keyword>
<keyword id="KW-0255">Endonuclease</keyword>
<keyword id="KW-0378">Hydrolase</keyword>
<keyword id="KW-0460">Magnesium</keyword>
<keyword id="KW-0479">Metal-binding</keyword>
<keyword id="KW-0507">mRNA processing</keyword>
<keyword id="KW-0540">Nuclease</keyword>
<keyword id="KW-0694">RNA-binding</keyword>
<keyword id="KW-0698">rRNA processing</keyword>
<keyword id="KW-0699">rRNA-binding</keyword>
<keyword id="KW-0819">tRNA processing</keyword>
<proteinExistence type="inferred from homology"/>
<protein>
    <recommendedName>
        <fullName evidence="1">Ribonuclease 3</fullName>
        <ecNumber evidence="1">3.1.26.3</ecNumber>
    </recommendedName>
    <alternativeName>
        <fullName evidence="1">Ribonuclease III</fullName>
        <shortName evidence="1">RNase III</shortName>
    </alternativeName>
</protein>
<sequence>MTKTPTLSQADRLTLEAAIGHAFVEKERLDWALTHASARTHKAGNYERLEFLGDRVLGLCIAELLFRTFGTATEGELSVRLNQLVSAETCAAVADEMQLHLFIRTGADVKKLTGKRMLNVRADVVESLIAALYLDGGLEVARKFILRYWEGRAVRPDGARRDAKTELQEWAHAKFGVTPVYRVDDRSGPDHDPRFTVTVEVAGAAPETGIERSKRAAEQVAATRILEREGIWQPQSAQK</sequence>
<accession>B9JC73</accession>
<gene>
    <name evidence="1" type="primary">rnc</name>
    <name type="ordered locus">Arad_1593</name>
</gene>
<comment type="function">
    <text evidence="1">Digests double-stranded RNA. Involved in the processing of primary rRNA transcript to yield the immediate precursors to the large and small rRNAs (23S and 16S). Processes some mRNAs, and tRNAs when they are encoded in the rRNA operon. Processes pre-crRNA and tracrRNA of type II CRISPR loci if present in the organism.</text>
</comment>
<comment type="catalytic activity">
    <reaction evidence="1">
        <text>Endonucleolytic cleavage to 5'-phosphomonoester.</text>
        <dbReference type="EC" id="3.1.26.3"/>
    </reaction>
</comment>
<comment type="cofactor">
    <cofactor evidence="1">
        <name>Mg(2+)</name>
        <dbReference type="ChEBI" id="CHEBI:18420"/>
    </cofactor>
</comment>
<comment type="subunit">
    <text evidence="1">Homodimer.</text>
</comment>
<comment type="subcellular location">
    <subcellularLocation>
        <location evidence="1">Cytoplasm</location>
    </subcellularLocation>
</comment>
<comment type="similarity">
    <text evidence="1">Belongs to the ribonuclease III family.</text>
</comment>
<evidence type="ECO:0000255" key="1">
    <source>
        <dbReference type="HAMAP-Rule" id="MF_00104"/>
    </source>
</evidence>
<reference key="1">
    <citation type="journal article" date="2009" name="J. Bacteriol.">
        <title>Genome sequences of three Agrobacterium biovars help elucidate the evolution of multichromosome genomes in bacteria.</title>
        <authorList>
            <person name="Slater S.C."/>
            <person name="Goldman B.S."/>
            <person name="Goodner B."/>
            <person name="Setubal J.C."/>
            <person name="Farrand S.K."/>
            <person name="Nester E.W."/>
            <person name="Burr T.J."/>
            <person name="Banta L."/>
            <person name="Dickerman A.W."/>
            <person name="Paulsen I."/>
            <person name="Otten L."/>
            <person name="Suen G."/>
            <person name="Welch R."/>
            <person name="Almeida N.F."/>
            <person name="Arnold F."/>
            <person name="Burton O.T."/>
            <person name="Du Z."/>
            <person name="Ewing A."/>
            <person name="Godsy E."/>
            <person name="Heisel S."/>
            <person name="Houmiel K.L."/>
            <person name="Jhaveri J."/>
            <person name="Lu J."/>
            <person name="Miller N.M."/>
            <person name="Norton S."/>
            <person name="Chen Q."/>
            <person name="Phoolcharoen W."/>
            <person name="Ohlin V."/>
            <person name="Ondrusek D."/>
            <person name="Pride N."/>
            <person name="Stricklin S.L."/>
            <person name="Sun J."/>
            <person name="Wheeler C."/>
            <person name="Wilson L."/>
            <person name="Zhu H."/>
            <person name="Wood D.W."/>
        </authorList>
    </citation>
    <scope>NUCLEOTIDE SEQUENCE [LARGE SCALE GENOMIC DNA]</scope>
    <source>
        <strain>K84 / ATCC BAA-868</strain>
    </source>
</reference>
<feature type="chain" id="PRO_1000118908" description="Ribonuclease 3">
    <location>
        <begin position="1"/>
        <end position="239"/>
    </location>
</feature>
<feature type="domain" description="RNase III" evidence="1">
    <location>
        <begin position="12"/>
        <end position="137"/>
    </location>
</feature>
<feature type="domain" description="DRBM" evidence="1">
    <location>
        <begin position="162"/>
        <end position="231"/>
    </location>
</feature>
<feature type="active site" evidence="1">
    <location>
        <position position="54"/>
    </location>
</feature>
<feature type="active site" evidence="1">
    <location>
        <position position="126"/>
    </location>
</feature>
<feature type="binding site" evidence="1">
    <location>
        <position position="50"/>
    </location>
    <ligand>
        <name>Mg(2+)</name>
        <dbReference type="ChEBI" id="CHEBI:18420"/>
    </ligand>
</feature>
<feature type="binding site" evidence="1">
    <location>
        <position position="123"/>
    </location>
    <ligand>
        <name>Mg(2+)</name>
        <dbReference type="ChEBI" id="CHEBI:18420"/>
    </ligand>
</feature>
<feature type="binding site" evidence="1">
    <location>
        <position position="126"/>
    </location>
    <ligand>
        <name>Mg(2+)</name>
        <dbReference type="ChEBI" id="CHEBI:18420"/>
    </ligand>
</feature>
<dbReference type="EC" id="3.1.26.3" evidence="1"/>
<dbReference type="EMBL" id="CP000628">
    <property type="protein sequence ID" value="ACM25994.1"/>
    <property type="molecule type" value="Genomic_DNA"/>
</dbReference>
<dbReference type="RefSeq" id="WP_007693085.1">
    <property type="nucleotide sequence ID" value="NC_011985.1"/>
</dbReference>
<dbReference type="SMR" id="B9JC73"/>
<dbReference type="STRING" id="311403.Arad_1593"/>
<dbReference type="GeneID" id="86847873"/>
<dbReference type="KEGG" id="ara:Arad_1593"/>
<dbReference type="eggNOG" id="COG0571">
    <property type="taxonomic scope" value="Bacteria"/>
</dbReference>
<dbReference type="HOGENOM" id="CLU_000907_1_1_5"/>
<dbReference type="Proteomes" id="UP000001600">
    <property type="component" value="Chromosome 1"/>
</dbReference>
<dbReference type="GO" id="GO:0005737">
    <property type="term" value="C:cytoplasm"/>
    <property type="evidence" value="ECO:0007669"/>
    <property type="project" value="UniProtKB-SubCell"/>
</dbReference>
<dbReference type="GO" id="GO:0003725">
    <property type="term" value="F:double-stranded RNA binding"/>
    <property type="evidence" value="ECO:0007669"/>
    <property type="project" value="TreeGrafter"/>
</dbReference>
<dbReference type="GO" id="GO:0046872">
    <property type="term" value="F:metal ion binding"/>
    <property type="evidence" value="ECO:0007669"/>
    <property type="project" value="UniProtKB-KW"/>
</dbReference>
<dbReference type="GO" id="GO:0004525">
    <property type="term" value="F:ribonuclease III activity"/>
    <property type="evidence" value="ECO:0007669"/>
    <property type="project" value="UniProtKB-UniRule"/>
</dbReference>
<dbReference type="GO" id="GO:0019843">
    <property type="term" value="F:rRNA binding"/>
    <property type="evidence" value="ECO:0007669"/>
    <property type="project" value="UniProtKB-KW"/>
</dbReference>
<dbReference type="GO" id="GO:0006397">
    <property type="term" value="P:mRNA processing"/>
    <property type="evidence" value="ECO:0007669"/>
    <property type="project" value="UniProtKB-UniRule"/>
</dbReference>
<dbReference type="GO" id="GO:0010468">
    <property type="term" value="P:regulation of gene expression"/>
    <property type="evidence" value="ECO:0007669"/>
    <property type="project" value="TreeGrafter"/>
</dbReference>
<dbReference type="GO" id="GO:0006364">
    <property type="term" value="P:rRNA processing"/>
    <property type="evidence" value="ECO:0007669"/>
    <property type="project" value="UniProtKB-UniRule"/>
</dbReference>
<dbReference type="GO" id="GO:0008033">
    <property type="term" value="P:tRNA processing"/>
    <property type="evidence" value="ECO:0007669"/>
    <property type="project" value="UniProtKB-KW"/>
</dbReference>
<dbReference type="CDD" id="cd10845">
    <property type="entry name" value="DSRM_RNAse_III_family"/>
    <property type="match status" value="1"/>
</dbReference>
<dbReference type="CDD" id="cd00593">
    <property type="entry name" value="RIBOc"/>
    <property type="match status" value="1"/>
</dbReference>
<dbReference type="Gene3D" id="3.30.160.20">
    <property type="match status" value="1"/>
</dbReference>
<dbReference type="Gene3D" id="1.10.1520.10">
    <property type="entry name" value="Ribonuclease III domain"/>
    <property type="match status" value="1"/>
</dbReference>
<dbReference type="HAMAP" id="MF_00104">
    <property type="entry name" value="RNase_III"/>
    <property type="match status" value="1"/>
</dbReference>
<dbReference type="InterPro" id="IPR014720">
    <property type="entry name" value="dsRBD_dom"/>
</dbReference>
<dbReference type="InterPro" id="IPR011907">
    <property type="entry name" value="RNase_III"/>
</dbReference>
<dbReference type="InterPro" id="IPR000999">
    <property type="entry name" value="RNase_III_dom"/>
</dbReference>
<dbReference type="InterPro" id="IPR036389">
    <property type="entry name" value="RNase_III_sf"/>
</dbReference>
<dbReference type="NCBIfam" id="TIGR02191">
    <property type="entry name" value="RNaseIII"/>
    <property type="match status" value="1"/>
</dbReference>
<dbReference type="PANTHER" id="PTHR11207:SF0">
    <property type="entry name" value="RIBONUCLEASE 3"/>
    <property type="match status" value="1"/>
</dbReference>
<dbReference type="PANTHER" id="PTHR11207">
    <property type="entry name" value="RIBONUCLEASE III"/>
    <property type="match status" value="1"/>
</dbReference>
<dbReference type="Pfam" id="PF00035">
    <property type="entry name" value="dsrm"/>
    <property type="match status" value="1"/>
</dbReference>
<dbReference type="Pfam" id="PF14622">
    <property type="entry name" value="Ribonucleas_3_3"/>
    <property type="match status" value="1"/>
</dbReference>
<dbReference type="SMART" id="SM00358">
    <property type="entry name" value="DSRM"/>
    <property type="match status" value="1"/>
</dbReference>
<dbReference type="SMART" id="SM00535">
    <property type="entry name" value="RIBOc"/>
    <property type="match status" value="1"/>
</dbReference>
<dbReference type="SUPFAM" id="SSF54768">
    <property type="entry name" value="dsRNA-binding domain-like"/>
    <property type="match status" value="1"/>
</dbReference>
<dbReference type="SUPFAM" id="SSF69065">
    <property type="entry name" value="RNase III domain-like"/>
    <property type="match status" value="1"/>
</dbReference>
<dbReference type="PROSITE" id="PS50137">
    <property type="entry name" value="DS_RBD"/>
    <property type="match status" value="1"/>
</dbReference>
<dbReference type="PROSITE" id="PS00517">
    <property type="entry name" value="RNASE_3_1"/>
    <property type="match status" value="1"/>
</dbReference>
<dbReference type="PROSITE" id="PS50142">
    <property type="entry name" value="RNASE_3_2"/>
    <property type="match status" value="1"/>
</dbReference>
<organism>
    <name type="scientific">Rhizobium rhizogenes (strain K84 / ATCC BAA-868)</name>
    <name type="common">Agrobacterium radiobacter</name>
    <dbReference type="NCBI Taxonomy" id="311403"/>
    <lineage>
        <taxon>Bacteria</taxon>
        <taxon>Pseudomonadati</taxon>
        <taxon>Pseudomonadota</taxon>
        <taxon>Alphaproteobacteria</taxon>
        <taxon>Hyphomicrobiales</taxon>
        <taxon>Rhizobiaceae</taxon>
        <taxon>Rhizobium/Agrobacterium group</taxon>
        <taxon>Rhizobium</taxon>
    </lineage>
</organism>